<sequence length="148" mass="16217">MKALIILGLVLLSVTVQGKIFERCELARTLKKLGLDGYKGVSLANWVCLAKWESGYNTEATNYNPGDESTDYGIFQINSRYWCNNGKTPGAVDACHISCSALLQNNIADAVACAKRVVSDPQGVRAWVAWRNHCQNKDVSQYVKGCGV</sequence>
<dbReference type="EC" id="3.2.1.17"/>
<dbReference type="EMBL" id="U76944">
    <property type="protein sequence ID" value="AAB41217.1"/>
    <property type="molecule type" value="Genomic_DNA"/>
</dbReference>
<dbReference type="EMBL" id="U76941">
    <property type="protein sequence ID" value="AAB41217.1"/>
    <property type="status" value="JOINED"/>
    <property type="molecule type" value="Genomic_DNA"/>
</dbReference>
<dbReference type="EMBL" id="U76942">
    <property type="protein sequence ID" value="AAB41217.1"/>
    <property type="status" value="JOINED"/>
    <property type="molecule type" value="Genomic_DNA"/>
</dbReference>
<dbReference type="EMBL" id="U76943">
    <property type="protein sequence ID" value="AAB41217.1"/>
    <property type="status" value="JOINED"/>
    <property type="molecule type" value="Genomic_DNA"/>
</dbReference>
<dbReference type="SMR" id="P79847"/>
<dbReference type="CAZy" id="GH22">
    <property type="family name" value="Glycoside Hydrolase Family 22"/>
</dbReference>
<dbReference type="GO" id="GO:0005576">
    <property type="term" value="C:extracellular region"/>
    <property type="evidence" value="ECO:0007669"/>
    <property type="project" value="UniProtKB-SubCell"/>
</dbReference>
<dbReference type="GO" id="GO:0003796">
    <property type="term" value="F:lysozyme activity"/>
    <property type="evidence" value="ECO:0007669"/>
    <property type="project" value="UniProtKB-EC"/>
</dbReference>
<dbReference type="GO" id="GO:0050829">
    <property type="term" value="P:defense response to Gram-negative bacterium"/>
    <property type="evidence" value="ECO:0007669"/>
    <property type="project" value="TreeGrafter"/>
</dbReference>
<dbReference type="GO" id="GO:0050830">
    <property type="term" value="P:defense response to Gram-positive bacterium"/>
    <property type="evidence" value="ECO:0007669"/>
    <property type="project" value="TreeGrafter"/>
</dbReference>
<dbReference type="GO" id="GO:0031640">
    <property type="term" value="P:killing of cells of another organism"/>
    <property type="evidence" value="ECO:0007669"/>
    <property type="project" value="UniProtKB-KW"/>
</dbReference>
<dbReference type="CDD" id="cd16897">
    <property type="entry name" value="LYZ_C"/>
    <property type="match status" value="1"/>
</dbReference>
<dbReference type="FunFam" id="1.10.530.10:FF:000001">
    <property type="entry name" value="Lysozyme C"/>
    <property type="match status" value="1"/>
</dbReference>
<dbReference type="Gene3D" id="1.10.530.10">
    <property type="match status" value="1"/>
</dbReference>
<dbReference type="InterPro" id="IPR001916">
    <property type="entry name" value="Glyco_hydro_22"/>
</dbReference>
<dbReference type="InterPro" id="IPR019799">
    <property type="entry name" value="Glyco_hydro_22_CS"/>
</dbReference>
<dbReference type="InterPro" id="IPR000974">
    <property type="entry name" value="Glyco_hydro_22_lys"/>
</dbReference>
<dbReference type="InterPro" id="IPR023346">
    <property type="entry name" value="Lysozyme-like_dom_sf"/>
</dbReference>
<dbReference type="PANTHER" id="PTHR11407">
    <property type="entry name" value="LYSOZYME C"/>
    <property type="match status" value="1"/>
</dbReference>
<dbReference type="PANTHER" id="PTHR11407:SF28">
    <property type="entry name" value="LYSOZYME C"/>
    <property type="match status" value="1"/>
</dbReference>
<dbReference type="Pfam" id="PF00062">
    <property type="entry name" value="Lys"/>
    <property type="match status" value="1"/>
</dbReference>
<dbReference type="PRINTS" id="PR00137">
    <property type="entry name" value="LYSOZYME"/>
</dbReference>
<dbReference type="PRINTS" id="PR00135">
    <property type="entry name" value="LYZLACT"/>
</dbReference>
<dbReference type="SMART" id="SM00263">
    <property type="entry name" value="LYZ1"/>
    <property type="match status" value="1"/>
</dbReference>
<dbReference type="SUPFAM" id="SSF53955">
    <property type="entry name" value="Lysozyme-like"/>
    <property type="match status" value="1"/>
</dbReference>
<dbReference type="PROSITE" id="PS00128">
    <property type="entry name" value="GLYCOSYL_HYDROL_F22_1"/>
    <property type="match status" value="1"/>
</dbReference>
<dbReference type="PROSITE" id="PS51348">
    <property type="entry name" value="GLYCOSYL_HYDROL_F22_2"/>
    <property type="match status" value="1"/>
</dbReference>
<organism>
    <name type="scientific">Pygathrix nemaeus</name>
    <name type="common">Red-shanked douc langur</name>
    <dbReference type="NCBI Taxonomy" id="54133"/>
    <lineage>
        <taxon>Eukaryota</taxon>
        <taxon>Metazoa</taxon>
        <taxon>Chordata</taxon>
        <taxon>Craniata</taxon>
        <taxon>Vertebrata</taxon>
        <taxon>Euteleostomi</taxon>
        <taxon>Mammalia</taxon>
        <taxon>Eutheria</taxon>
        <taxon>Euarchontoglires</taxon>
        <taxon>Primates</taxon>
        <taxon>Haplorrhini</taxon>
        <taxon>Catarrhini</taxon>
        <taxon>Cercopithecidae</taxon>
        <taxon>Colobinae</taxon>
        <taxon>Pygathrix</taxon>
    </lineage>
</organism>
<accession>P79847</accession>
<keyword id="KW-0929">Antimicrobial</keyword>
<keyword id="KW-0081">Bacteriolytic enzyme</keyword>
<keyword id="KW-1015">Disulfide bond</keyword>
<keyword id="KW-0326">Glycosidase</keyword>
<keyword id="KW-0378">Hydrolase</keyword>
<keyword id="KW-0964">Secreted</keyword>
<keyword id="KW-0732">Signal</keyword>
<gene>
    <name type="primary">LYZ</name>
    <name type="synonym">LZM</name>
</gene>
<comment type="function">
    <text>Lysozymes have primarily a bacteriolytic function; those in tissues and body fluids are associated with the monocyte-macrophage system and enhance the activity of immunoagents.</text>
</comment>
<comment type="catalytic activity">
    <reaction>
        <text>Hydrolysis of (1-&gt;4)-beta-linkages between N-acetylmuramic acid and N-acetyl-D-glucosamine residues in a peptidoglycan and between N-acetyl-D-glucosamine residues in chitodextrins.</text>
        <dbReference type="EC" id="3.2.1.17"/>
    </reaction>
</comment>
<comment type="subunit">
    <text>Monomer.</text>
</comment>
<comment type="subcellular location">
    <subcellularLocation>
        <location evidence="1">Secreted</location>
    </subcellularLocation>
</comment>
<comment type="miscellaneous">
    <text>Lysozyme C is capable of both hydrolysis and transglycosylation; it also shows a slight esterase activity. It acts rapidly on both peptide-substituted and unsubstituted peptidoglycan, and slowly on chitin oligosaccharides.</text>
</comment>
<comment type="similarity">
    <text evidence="2">Belongs to the glycosyl hydrolase 22 family.</text>
</comment>
<evidence type="ECO:0000250" key="1"/>
<evidence type="ECO:0000255" key="2">
    <source>
        <dbReference type="PROSITE-ProRule" id="PRU00680"/>
    </source>
</evidence>
<proteinExistence type="inferred from homology"/>
<feature type="signal peptide" evidence="1">
    <location>
        <begin position="1"/>
        <end position="18"/>
    </location>
</feature>
<feature type="chain" id="PRO_0000018483" description="Lysozyme C">
    <location>
        <begin position="19"/>
        <end position="148"/>
    </location>
</feature>
<feature type="domain" description="C-type lysozyme" evidence="2">
    <location>
        <begin position="19"/>
        <end position="148"/>
    </location>
</feature>
<feature type="active site" evidence="2">
    <location>
        <position position="53"/>
    </location>
</feature>
<feature type="active site" evidence="2">
    <location>
        <position position="71"/>
    </location>
</feature>
<feature type="disulfide bond" evidence="2">
    <location>
        <begin position="24"/>
        <end position="146"/>
    </location>
</feature>
<feature type="disulfide bond" evidence="2">
    <location>
        <begin position="48"/>
        <end position="134"/>
    </location>
</feature>
<feature type="disulfide bond" evidence="2">
    <location>
        <begin position="83"/>
        <end position="99"/>
    </location>
</feature>
<feature type="disulfide bond" evidence="2">
    <location>
        <begin position="95"/>
        <end position="113"/>
    </location>
</feature>
<protein>
    <recommendedName>
        <fullName>Lysozyme C</fullName>
        <ecNumber>3.2.1.17</ecNumber>
    </recommendedName>
    <alternativeName>
        <fullName>1,4-beta-N-acetylmuramidase C</fullName>
    </alternativeName>
</protein>
<name>LYSC_PYGNE</name>
<reference key="1">
    <citation type="journal article" date="1997" name="Nature">
        <title>Episodic adaptive evolution of primate lysozymes.</title>
        <authorList>
            <person name="Messier W."/>
            <person name="Stewart C.B."/>
        </authorList>
    </citation>
    <scope>NUCLEOTIDE SEQUENCE [GENOMIC DNA]</scope>
    <source>
        <tissue>Blood</tissue>
    </source>
</reference>